<keyword id="KW-0030">Aminoacyl-tRNA synthetase</keyword>
<keyword id="KW-0067">ATP-binding</keyword>
<keyword id="KW-0963">Cytoplasm</keyword>
<keyword id="KW-0436">Ligase</keyword>
<keyword id="KW-0460">Magnesium</keyword>
<keyword id="KW-0479">Metal-binding</keyword>
<keyword id="KW-0547">Nucleotide-binding</keyword>
<keyword id="KW-0648">Protein biosynthesis</keyword>
<keyword id="KW-1185">Reference proteome</keyword>
<gene>
    <name evidence="1" type="primary">pheT</name>
    <name type="ordered locus">Kcr_1604</name>
</gene>
<feature type="chain" id="PRO_1000114944" description="Phenylalanine--tRNA ligase beta subunit">
    <location>
        <begin position="1"/>
        <end position="556"/>
    </location>
</feature>
<feature type="domain" description="B5" evidence="1">
    <location>
        <begin position="274"/>
        <end position="349"/>
    </location>
</feature>
<feature type="binding site" evidence="1">
    <location>
        <position position="327"/>
    </location>
    <ligand>
        <name>Mg(2+)</name>
        <dbReference type="ChEBI" id="CHEBI:18420"/>
        <note>shared with alpha subunit</note>
    </ligand>
</feature>
<feature type="binding site" evidence="1">
    <location>
        <position position="333"/>
    </location>
    <ligand>
        <name>Mg(2+)</name>
        <dbReference type="ChEBI" id="CHEBI:18420"/>
        <note>shared with alpha subunit</note>
    </ligand>
</feature>
<feature type="binding site" evidence="1">
    <location>
        <position position="336"/>
    </location>
    <ligand>
        <name>Mg(2+)</name>
        <dbReference type="ChEBI" id="CHEBI:18420"/>
        <note>shared with alpha subunit</note>
    </ligand>
</feature>
<feature type="binding site" evidence="1">
    <location>
        <position position="337"/>
    </location>
    <ligand>
        <name>Mg(2+)</name>
        <dbReference type="ChEBI" id="CHEBI:18420"/>
        <note>shared with alpha subunit</note>
    </ligand>
</feature>
<organism>
    <name type="scientific">Korarchaeum cryptofilum (strain OPF8)</name>
    <dbReference type="NCBI Taxonomy" id="374847"/>
    <lineage>
        <taxon>Archaea</taxon>
        <taxon>Thermoproteota</taxon>
        <taxon>Candidatus Korarchaeia</taxon>
        <taxon>Candidatus Korarchaeales</taxon>
        <taxon>Candidatus Korarchaeaceae</taxon>
        <taxon>Candidatus Korarchaeum</taxon>
    </lineage>
</organism>
<sequence length="556" mass="62916">MPVVSFSRREMERLWRSLSEEELTDLLDFTKMNLESFGEEVGFEVTSDRMDLVTLEGIVRCLKGISNEELGLPKYRVRRKAFEVRVGEGVAKVRPYVVAALVRDVDLRTEESLVALIEAQEKIHDTLGRKRRRVAIGLHDFSKVKPPIIYDARRAEEVHFVPLGEYAEMSAKEILEQTEKGKIYSHLIANPENLVPLIMDSREEVLSMPPIINSELTRLTPGVRDIFIDVTGTDLKAIWYALEIISSALAERGGEISTLDILYPDGRNIETPRHEPEEMEVDLDFIRSILGLNLSEDDVVMQLLRARLDAECSDGKVRVLIPGYRSDFLHPIDVAEEVSITLGLNKIGYELPKNVMTVGRPHPVEKVSRKVRTVMIGLGYQEVLNYIMTSRASLFHAVGREEREVVEISNPVSESYSVLRDALFPGLLAFLANNTHVRYPQKVFEIGDVVLIDERLENKTRDERRVAAAYADDSVGFEDIYSHLKVLFENLSYRIELEPRKERPFIEGRCASVLREGEEVGVIGEIDPEVLLNLGITVPVAIFEVALKVPGKEPLT</sequence>
<name>SYFB_KORCO</name>
<comment type="catalytic activity">
    <reaction evidence="1">
        <text>tRNA(Phe) + L-phenylalanine + ATP = L-phenylalanyl-tRNA(Phe) + AMP + diphosphate + H(+)</text>
        <dbReference type="Rhea" id="RHEA:19413"/>
        <dbReference type="Rhea" id="RHEA-COMP:9668"/>
        <dbReference type="Rhea" id="RHEA-COMP:9699"/>
        <dbReference type="ChEBI" id="CHEBI:15378"/>
        <dbReference type="ChEBI" id="CHEBI:30616"/>
        <dbReference type="ChEBI" id="CHEBI:33019"/>
        <dbReference type="ChEBI" id="CHEBI:58095"/>
        <dbReference type="ChEBI" id="CHEBI:78442"/>
        <dbReference type="ChEBI" id="CHEBI:78531"/>
        <dbReference type="ChEBI" id="CHEBI:456215"/>
        <dbReference type="EC" id="6.1.1.20"/>
    </reaction>
</comment>
<comment type="cofactor">
    <cofactor evidence="1">
        <name>Mg(2+)</name>
        <dbReference type="ChEBI" id="CHEBI:18420"/>
    </cofactor>
</comment>
<comment type="subunit">
    <text evidence="1">Tetramer of two alpha and two beta subunits.</text>
</comment>
<comment type="subcellular location">
    <subcellularLocation>
        <location evidence="1">Cytoplasm</location>
    </subcellularLocation>
</comment>
<comment type="similarity">
    <text evidence="1">Belongs to the phenylalanyl-tRNA synthetase beta subunit family. Type 2 subfamily.</text>
</comment>
<reference key="1">
    <citation type="journal article" date="2008" name="Proc. Natl. Acad. Sci. U.S.A.">
        <title>A korarchaeal genome reveals new insights into the evolution of the Archaea.</title>
        <authorList>
            <person name="Elkins J.G."/>
            <person name="Podar M."/>
            <person name="Graham D.E."/>
            <person name="Makarova K.S."/>
            <person name="Wolf Y."/>
            <person name="Randau L."/>
            <person name="Hedlund B.P."/>
            <person name="Brochier-Armanet C."/>
            <person name="Kunin V."/>
            <person name="Anderson I."/>
            <person name="Lapidus A."/>
            <person name="Goltsman E."/>
            <person name="Barry K."/>
            <person name="Koonin E.V."/>
            <person name="Hugenholtz P."/>
            <person name="Kyrpides N."/>
            <person name="Wanner G."/>
            <person name="Richardson P."/>
            <person name="Keller M."/>
            <person name="Stetter K.O."/>
        </authorList>
    </citation>
    <scope>NUCLEOTIDE SEQUENCE [LARGE SCALE GENOMIC DNA]</scope>
    <source>
        <strain>OPF8</strain>
    </source>
</reference>
<evidence type="ECO:0000255" key="1">
    <source>
        <dbReference type="HAMAP-Rule" id="MF_00284"/>
    </source>
</evidence>
<protein>
    <recommendedName>
        <fullName evidence="1">Phenylalanine--tRNA ligase beta subunit</fullName>
        <ecNumber evidence="1">6.1.1.20</ecNumber>
    </recommendedName>
    <alternativeName>
        <fullName evidence="1">Phenylalanyl-tRNA synthetase beta subunit</fullName>
        <shortName evidence="1">PheRS</shortName>
    </alternativeName>
</protein>
<accession>B1L7C0</accession>
<proteinExistence type="inferred from homology"/>
<dbReference type="EC" id="6.1.1.20" evidence="1"/>
<dbReference type="EMBL" id="CP000968">
    <property type="protein sequence ID" value="ACB08349.1"/>
    <property type="molecule type" value="Genomic_DNA"/>
</dbReference>
<dbReference type="SMR" id="B1L7C0"/>
<dbReference type="FunCoup" id="B1L7C0">
    <property type="interactions" value="234"/>
</dbReference>
<dbReference type="STRING" id="374847.Kcr_1604"/>
<dbReference type="EnsemblBacteria" id="ACB08349">
    <property type="protein sequence ID" value="ACB08349"/>
    <property type="gene ID" value="Kcr_1604"/>
</dbReference>
<dbReference type="KEGG" id="kcr:Kcr_1604"/>
<dbReference type="eggNOG" id="arCOG00412">
    <property type="taxonomic scope" value="Archaea"/>
</dbReference>
<dbReference type="HOGENOM" id="CLU_020279_3_0_2"/>
<dbReference type="InParanoid" id="B1L7C0"/>
<dbReference type="OrthoDB" id="10073at2157"/>
<dbReference type="PhylomeDB" id="B1L7C0"/>
<dbReference type="Proteomes" id="UP000001686">
    <property type="component" value="Chromosome"/>
</dbReference>
<dbReference type="GO" id="GO:0009328">
    <property type="term" value="C:phenylalanine-tRNA ligase complex"/>
    <property type="evidence" value="ECO:0000318"/>
    <property type="project" value="GO_Central"/>
</dbReference>
<dbReference type="GO" id="GO:0005524">
    <property type="term" value="F:ATP binding"/>
    <property type="evidence" value="ECO:0007669"/>
    <property type="project" value="UniProtKB-UniRule"/>
</dbReference>
<dbReference type="GO" id="GO:0000287">
    <property type="term" value="F:magnesium ion binding"/>
    <property type="evidence" value="ECO:0007669"/>
    <property type="project" value="InterPro"/>
</dbReference>
<dbReference type="GO" id="GO:0004826">
    <property type="term" value="F:phenylalanine-tRNA ligase activity"/>
    <property type="evidence" value="ECO:0007669"/>
    <property type="project" value="UniProtKB-UniRule"/>
</dbReference>
<dbReference type="GO" id="GO:0003723">
    <property type="term" value="F:RNA binding"/>
    <property type="evidence" value="ECO:0007669"/>
    <property type="project" value="InterPro"/>
</dbReference>
<dbReference type="GO" id="GO:0006432">
    <property type="term" value="P:phenylalanyl-tRNA aminoacylation"/>
    <property type="evidence" value="ECO:0000318"/>
    <property type="project" value="GO_Central"/>
</dbReference>
<dbReference type="CDD" id="cd00769">
    <property type="entry name" value="PheRS_beta_core"/>
    <property type="match status" value="1"/>
</dbReference>
<dbReference type="FunFam" id="3.30.930.10:FF:000132">
    <property type="entry name" value="Phenylalanine--tRNA ligase beta subunit"/>
    <property type="match status" value="1"/>
</dbReference>
<dbReference type="FunFam" id="3.50.40.10:FF:000003">
    <property type="entry name" value="Phenylalanine--tRNA ligase beta subunit"/>
    <property type="match status" value="1"/>
</dbReference>
<dbReference type="Gene3D" id="3.30.56.10">
    <property type="match status" value="2"/>
</dbReference>
<dbReference type="Gene3D" id="3.30.930.10">
    <property type="entry name" value="Bira Bifunctional Protein, Domain 2"/>
    <property type="match status" value="1"/>
</dbReference>
<dbReference type="Gene3D" id="3.50.40.10">
    <property type="entry name" value="Phenylalanyl-trna Synthetase, Chain B, domain 3"/>
    <property type="match status" value="1"/>
</dbReference>
<dbReference type="HAMAP" id="MF_00284">
    <property type="entry name" value="Phe_tRNA_synth_beta2"/>
    <property type="match status" value="1"/>
</dbReference>
<dbReference type="InterPro" id="IPR045864">
    <property type="entry name" value="aa-tRNA-synth_II/BPL/LPL"/>
</dbReference>
<dbReference type="InterPro" id="IPR005146">
    <property type="entry name" value="B3/B4_tRNA-bd"/>
</dbReference>
<dbReference type="InterPro" id="IPR009061">
    <property type="entry name" value="DNA-bd_dom_put_sf"/>
</dbReference>
<dbReference type="InterPro" id="IPR045060">
    <property type="entry name" value="Phe-tRNA-ligase_IIc_bsu"/>
</dbReference>
<dbReference type="InterPro" id="IPR004531">
    <property type="entry name" value="Phe-tRNA-synth_IIc_bsu_arc_euk"/>
</dbReference>
<dbReference type="InterPro" id="IPR020825">
    <property type="entry name" value="Phe-tRNA_synthase-like_B3/B4"/>
</dbReference>
<dbReference type="InterPro" id="IPR022918">
    <property type="entry name" value="Phe_tRNA_ligase_beta2_arc"/>
</dbReference>
<dbReference type="InterPro" id="IPR041616">
    <property type="entry name" value="PheRS_beta_core"/>
</dbReference>
<dbReference type="InterPro" id="IPR005147">
    <property type="entry name" value="tRNA_synthase_B5-dom"/>
</dbReference>
<dbReference type="NCBIfam" id="TIGR00471">
    <property type="entry name" value="pheT_arch"/>
    <property type="match status" value="1"/>
</dbReference>
<dbReference type="PANTHER" id="PTHR10947:SF0">
    <property type="entry name" value="PHENYLALANINE--TRNA LIGASE BETA SUBUNIT"/>
    <property type="match status" value="1"/>
</dbReference>
<dbReference type="PANTHER" id="PTHR10947">
    <property type="entry name" value="PHENYLALANYL-TRNA SYNTHETASE BETA CHAIN AND LEUCINE-RICH REPEAT-CONTAINING PROTEIN 47"/>
    <property type="match status" value="1"/>
</dbReference>
<dbReference type="Pfam" id="PF03484">
    <property type="entry name" value="B5"/>
    <property type="match status" value="1"/>
</dbReference>
<dbReference type="Pfam" id="PF17759">
    <property type="entry name" value="tRNA_synthFbeta"/>
    <property type="match status" value="1"/>
</dbReference>
<dbReference type="SMART" id="SM00873">
    <property type="entry name" value="B3_4"/>
    <property type="match status" value="1"/>
</dbReference>
<dbReference type="SMART" id="SM00874">
    <property type="entry name" value="B5"/>
    <property type="match status" value="1"/>
</dbReference>
<dbReference type="SUPFAM" id="SSF55681">
    <property type="entry name" value="Class II aaRS and biotin synthetases"/>
    <property type="match status" value="1"/>
</dbReference>
<dbReference type="SUPFAM" id="SSF46955">
    <property type="entry name" value="Putative DNA-binding domain"/>
    <property type="match status" value="1"/>
</dbReference>
<dbReference type="PROSITE" id="PS51483">
    <property type="entry name" value="B5"/>
    <property type="match status" value="1"/>
</dbReference>